<proteinExistence type="inferred from homology"/>
<organism>
    <name type="scientific">Streptococcus pneumoniae (strain 70585)</name>
    <dbReference type="NCBI Taxonomy" id="488221"/>
    <lineage>
        <taxon>Bacteria</taxon>
        <taxon>Bacillati</taxon>
        <taxon>Bacillota</taxon>
        <taxon>Bacilli</taxon>
        <taxon>Lactobacillales</taxon>
        <taxon>Streptococcaceae</taxon>
        <taxon>Streptococcus</taxon>
    </lineage>
</organism>
<accession>C1CAL5</accession>
<comment type="function">
    <text evidence="1">One of the primary rRNA binding proteins. Required for association of the 30S and 50S subunits to form the 70S ribosome, for tRNA binding and peptide bond formation. It has been suggested to have peptidyltransferase activity; this is somewhat controversial. Makes several contacts with the 16S rRNA in the 70S ribosome.</text>
</comment>
<comment type="subunit">
    <text evidence="1">Part of the 50S ribosomal subunit. Forms a bridge to the 30S subunit in the 70S ribosome.</text>
</comment>
<comment type="similarity">
    <text evidence="1">Belongs to the universal ribosomal protein uL2 family.</text>
</comment>
<evidence type="ECO:0000255" key="1">
    <source>
        <dbReference type="HAMAP-Rule" id="MF_01320"/>
    </source>
</evidence>
<evidence type="ECO:0000256" key="2">
    <source>
        <dbReference type="SAM" id="MobiDB-lite"/>
    </source>
</evidence>
<evidence type="ECO:0000305" key="3"/>
<keyword id="KW-0687">Ribonucleoprotein</keyword>
<keyword id="KW-0689">Ribosomal protein</keyword>
<keyword id="KW-0694">RNA-binding</keyword>
<keyword id="KW-0699">rRNA-binding</keyword>
<gene>
    <name evidence="1" type="primary">rplB</name>
    <name type="ordered locus">SP70585_0268</name>
</gene>
<reference key="1">
    <citation type="journal article" date="2010" name="Genome Biol.">
        <title>Structure and dynamics of the pan-genome of Streptococcus pneumoniae and closely related species.</title>
        <authorList>
            <person name="Donati C."/>
            <person name="Hiller N.L."/>
            <person name="Tettelin H."/>
            <person name="Muzzi A."/>
            <person name="Croucher N.J."/>
            <person name="Angiuoli S.V."/>
            <person name="Oggioni M."/>
            <person name="Dunning Hotopp J.C."/>
            <person name="Hu F.Z."/>
            <person name="Riley D.R."/>
            <person name="Covacci A."/>
            <person name="Mitchell T.J."/>
            <person name="Bentley S.D."/>
            <person name="Kilian M."/>
            <person name="Ehrlich G.D."/>
            <person name="Rappuoli R."/>
            <person name="Moxon E.R."/>
            <person name="Masignani V."/>
        </authorList>
    </citation>
    <scope>NUCLEOTIDE SEQUENCE [LARGE SCALE GENOMIC DNA]</scope>
    <source>
        <strain>70585</strain>
    </source>
</reference>
<dbReference type="EMBL" id="CP000918">
    <property type="protein sequence ID" value="ACO17539.1"/>
    <property type="molecule type" value="Genomic_DNA"/>
</dbReference>
<dbReference type="RefSeq" id="WP_000512911.1">
    <property type="nucleotide sequence ID" value="NC_012468.1"/>
</dbReference>
<dbReference type="SMR" id="C1CAL5"/>
<dbReference type="GeneID" id="93738960"/>
<dbReference type="KEGG" id="snm:SP70585_0268"/>
<dbReference type="HOGENOM" id="CLU_036235_2_1_9"/>
<dbReference type="Proteomes" id="UP000002211">
    <property type="component" value="Chromosome"/>
</dbReference>
<dbReference type="GO" id="GO:0015934">
    <property type="term" value="C:large ribosomal subunit"/>
    <property type="evidence" value="ECO:0007669"/>
    <property type="project" value="InterPro"/>
</dbReference>
<dbReference type="GO" id="GO:0019843">
    <property type="term" value="F:rRNA binding"/>
    <property type="evidence" value="ECO:0007669"/>
    <property type="project" value="UniProtKB-UniRule"/>
</dbReference>
<dbReference type="GO" id="GO:0003735">
    <property type="term" value="F:structural constituent of ribosome"/>
    <property type="evidence" value="ECO:0007669"/>
    <property type="project" value="InterPro"/>
</dbReference>
<dbReference type="GO" id="GO:0016740">
    <property type="term" value="F:transferase activity"/>
    <property type="evidence" value="ECO:0007669"/>
    <property type="project" value="InterPro"/>
</dbReference>
<dbReference type="GO" id="GO:0002181">
    <property type="term" value="P:cytoplasmic translation"/>
    <property type="evidence" value="ECO:0007669"/>
    <property type="project" value="TreeGrafter"/>
</dbReference>
<dbReference type="FunFam" id="2.30.30.30:FF:000001">
    <property type="entry name" value="50S ribosomal protein L2"/>
    <property type="match status" value="1"/>
</dbReference>
<dbReference type="FunFam" id="2.40.50.140:FF:000003">
    <property type="entry name" value="50S ribosomal protein L2"/>
    <property type="match status" value="1"/>
</dbReference>
<dbReference type="FunFam" id="4.10.950.10:FF:000001">
    <property type="entry name" value="50S ribosomal protein L2"/>
    <property type="match status" value="1"/>
</dbReference>
<dbReference type="Gene3D" id="2.30.30.30">
    <property type="match status" value="1"/>
</dbReference>
<dbReference type="Gene3D" id="2.40.50.140">
    <property type="entry name" value="Nucleic acid-binding proteins"/>
    <property type="match status" value="1"/>
</dbReference>
<dbReference type="Gene3D" id="4.10.950.10">
    <property type="entry name" value="Ribosomal protein L2, domain 3"/>
    <property type="match status" value="1"/>
</dbReference>
<dbReference type="HAMAP" id="MF_01320_B">
    <property type="entry name" value="Ribosomal_uL2_B"/>
    <property type="match status" value="1"/>
</dbReference>
<dbReference type="InterPro" id="IPR012340">
    <property type="entry name" value="NA-bd_OB-fold"/>
</dbReference>
<dbReference type="InterPro" id="IPR014722">
    <property type="entry name" value="Rib_uL2_dom2"/>
</dbReference>
<dbReference type="InterPro" id="IPR002171">
    <property type="entry name" value="Ribosomal_uL2"/>
</dbReference>
<dbReference type="InterPro" id="IPR005880">
    <property type="entry name" value="Ribosomal_uL2_bac/org-type"/>
</dbReference>
<dbReference type="InterPro" id="IPR022669">
    <property type="entry name" value="Ribosomal_uL2_C"/>
</dbReference>
<dbReference type="InterPro" id="IPR022671">
    <property type="entry name" value="Ribosomal_uL2_CS"/>
</dbReference>
<dbReference type="InterPro" id="IPR014726">
    <property type="entry name" value="Ribosomal_uL2_dom3"/>
</dbReference>
<dbReference type="InterPro" id="IPR022666">
    <property type="entry name" value="Ribosomal_uL2_RNA-bd_dom"/>
</dbReference>
<dbReference type="InterPro" id="IPR008991">
    <property type="entry name" value="Translation_prot_SH3-like_sf"/>
</dbReference>
<dbReference type="NCBIfam" id="TIGR01171">
    <property type="entry name" value="rplB_bact"/>
    <property type="match status" value="1"/>
</dbReference>
<dbReference type="PANTHER" id="PTHR13691:SF5">
    <property type="entry name" value="LARGE RIBOSOMAL SUBUNIT PROTEIN UL2M"/>
    <property type="match status" value="1"/>
</dbReference>
<dbReference type="PANTHER" id="PTHR13691">
    <property type="entry name" value="RIBOSOMAL PROTEIN L2"/>
    <property type="match status" value="1"/>
</dbReference>
<dbReference type="Pfam" id="PF00181">
    <property type="entry name" value="Ribosomal_L2"/>
    <property type="match status" value="1"/>
</dbReference>
<dbReference type="Pfam" id="PF03947">
    <property type="entry name" value="Ribosomal_L2_C"/>
    <property type="match status" value="1"/>
</dbReference>
<dbReference type="PIRSF" id="PIRSF002158">
    <property type="entry name" value="Ribosomal_L2"/>
    <property type="match status" value="1"/>
</dbReference>
<dbReference type="SMART" id="SM01383">
    <property type="entry name" value="Ribosomal_L2"/>
    <property type="match status" value="1"/>
</dbReference>
<dbReference type="SMART" id="SM01382">
    <property type="entry name" value="Ribosomal_L2_C"/>
    <property type="match status" value="1"/>
</dbReference>
<dbReference type="SUPFAM" id="SSF50249">
    <property type="entry name" value="Nucleic acid-binding proteins"/>
    <property type="match status" value="1"/>
</dbReference>
<dbReference type="SUPFAM" id="SSF50104">
    <property type="entry name" value="Translation proteins SH3-like domain"/>
    <property type="match status" value="1"/>
</dbReference>
<dbReference type="PROSITE" id="PS00467">
    <property type="entry name" value="RIBOSOMAL_L2"/>
    <property type="match status" value="1"/>
</dbReference>
<name>RL2_STRP7</name>
<protein>
    <recommendedName>
        <fullName evidence="1">Large ribosomal subunit protein uL2</fullName>
    </recommendedName>
    <alternativeName>
        <fullName evidence="3">50S ribosomal protein L2</fullName>
    </alternativeName>
</protein>
<sequence>MGIRVYKPTTNGRRNMTSLDFAEITTSTPEKSLLVALKSKAGRNNNGRITVRHQGGGHKRFYRLVDFKRNKDNVEAVVKTIEYDPNRSANIALVHYTDGVKAYIIAPKGLEVGQRIVSGPEADIKVGNALPLANIPVGTLIHNIELKPGRGGELVRAAGASAQVLGSEGKYVLVRLQSGEVRMILGTCRATVGVVGNEQHGLVNLGKAGRSRWKGIRPTVRGSVMNPNDHPHGGGEGKAPVGRKAPSTPWGKPALGLKTRNKKAKSDKLIVRRRNEK</sequence>
<feature type="chain" id="PRO_1000165770" description="Large ribosomal subunit protein uL2">
    <location>
        <begin position="1"/>
        <end position="277"/>
    </location>
</feature>
<feature type="region of interest" description="Disordered" evidence="2">
    <location>
        <begin position="219"/>
        <end position="277"/>
    </location>
</feature>
<feature type="compositionally biased region" description="Basic and acidic residues" evidence="2">
    <location>
        <begin position="264"/>
        <end position="277"/>
    </location>
</feature>